<reference key="1">
    <citation type="journal article" date="2004" name="J. Bacteriol.">
        <title>The pKO2 linear plasmid prophage of Klebsiella oxytoca.</title>
        <authorList>
            <person name="Casjens S.R."/>
            <person name="Gilcrease E.B."/>
            <person name="Huang W.M."/>
            <person name="Bunny K.L."/>
            <person name="Pedulla M.L."/>
            <person name="Ford M.E."/>
            <person name="Houtz J.M."/>
            <person name="Hatfull G.F."/>
            <person name="Hendrix R.W."/>
        </authorList>
    </citation>
    <scope>NUCLEOTIDE SEQUENCE [GENOMIC DNA]</scope>
    <scope>PROTEIN SEQUENCE OF 126-132</scope>
    <scope>SUBCELLULAR LOCATION (MATURE MAJOR CAPSID PROTEIN)</scope>
    <scope>PROTEOLYTIC CLEAVAGE (MAJOR CAPSID PROTEIN)</scope>
    <scope>FUNCTION (MATURE MAJOR CAPSID PROTEIN)</scope>
</reference>
<sequence>MPQIEELRRQRAGINEQIQALATIEATNGTLTAEQLTEFAGLQQQFTDISAKMDRMEATERAAALVAKPVKATQHGPAVIVKAEPKQYTGAGMTRMVMSIAAAQGNLQDAAKFASDELNDQSVSMAISTAAGSGGVLIPQNIHSEVIELLRDRTIVRKLGARSIPLPNGNMSLPRLAGGATASYTGENQDAKVSEARFDDVKLTAKTMIAMVPISNALIGRAGFNVEQLVLQDILTAISVREDKAFMRDDGTGDTPIGMKARATQWNRLLPWAADAAVNLDTIDTYLDSIILMSMDGNSNMISSGWGMSNRTYMKLFGLRDGNGNKVYPEMAQGMLKGYPIQRTSAIPANLGEGGKESEIYFADFNDVVIGEDGNMKVDFSKEASYIDTDGKLVSAFSRNQSLIRVVTEHDIGFRHPEGLVLGTGVLF</sequence>
<evidence type="ECO:0000250" key="1">
    <source>
        <dbReference type="UniProtKB" id="P49861"/>
    </source>
</evidence>
<evidence type="ECO:0000250" key="2">
    <source>
        <dbReference type="UniProtKB" id="Q6QGD8"/>
    </source>
</evidence>
<evidence type="ECO:0000255" key="3"/>
<evidence type="ECO:0000269" key="4">
    <source>
    </source>
</evidence>
<evidence type="ECO:0000303" key="5">
    <source>
    </source>
</evidence>
<evidence type="ECO:0000305" key="6"/>
<evidence type="ECO:0000305" key="7">
    <source>
    </source>
</evidence>
<evidence type="ECO:0000312" key="8">
    <source>
        <dbReference type="EMBL" id="AAR83022.1"/>
    </source>
</evidence>
<gene>
    <name evidence="8" type="ORF">6</name>
</gene>
<organismHost>
    <name type="scientific">Klebsiella oxytoca</name>
    <dbReference type="NCBI Taxonomy" id="571"/>
</organismHost>
<protein>
    <recommendedName>
        <fullName evidence="5">Major capsid protein</fullName>
    </recommendedName>
    <alternativeName>
        <fullName evidence="6">Gene product 6</fullName>
        <shortName>Gp6</shortName>
    </alternativeName>
    <alternativeName>
        <fullName evidence="6">Major head protein</fullName>
    </alternativeName>
    <component>
        <recommendedName>
            <fullName evidence="2">Scaffolding domain delta</fullName>
        </recommendedName>
    </component>
</protein>
<dbReference type="EMBL" id="AY374448">
    <property type="protein sequence ID" value="AAR83022.1"/>
    <property type="molecule type" value="Genomic_DNA"/>
</dbReference>
<dbReference type="RefSeq" id="YP_006586.1">
    <property type="nucleotide sequence ID" value="NC_005857.1"/>
</dbReference>
<dbReference type="KEGG" id="vg:2777903"/>
<dbReference type="OrthoDB" id="16320at10239"/>
<dbReference type="Proteomes" id="UP000001047">
    <property type="component" value="Genome"/>
</dbReference>
<dbReference type="GO" id="GO:0044423">
    <property type="term" value="C:virion component"/>
    <property type="evidence" value="ECO:0007669"/>
    <property type="project" value="UniProtKB-KW"/>
</dbReference>
<dbReference type="Gene3D" id="3.30.2320.10">
    <property type="entry name" value="hypothetical protein PF0899 domain"/>
    <property type="match status" value="1"/>
</dbReference>
<dbReference type="Gene3D" id="3.30.2400.10">
    <property type="entry name" value="Major capsid protein gp5"/>
    <property type="match status" value="1"/>
</dbReference>
<dbReference type="InterPro" id="IPR024455">
    <property type="entry name" value="Phage_capsid"/>
</dbReference>
<dbReference type="InterPro" id="IPR054612">
    <property type="entry name" value="Phage_capsid-like_C"/>
</dbReference>
<dbReference type="NCBIfam" id="TIGR01554">
    <property type="entry name" value="major_cap_HK97"/>
    <property type="match status" value="1"/>
</dbReference>
<dbReference type="Pfam" id="PF05065">
    <property type="entry name" value="Phage_capsid"/>
    <property type="match status" value="1"/>
</dbReference>
<dbReference type="SUPFAM" id="SSF56563">
    <property type="entry name" value="Major capsid protein gp5"/>
    <property type="match status" value="1"/>
</dbReference>
<organism>
    <name type="scientific">Klebsiella oxytoca phage phiKO2</name>
    <name type="common">Bacteriophage phiKO2</name>
    <dbReference type="NCBI Taxonomy" id="255431"/>
    <lineage>
        <taxon>Viruses</taxon>
        <taxon>Duplodnaviria</taxon>
        <taxon>Heunggongvirae</taxon>
        <taxon>Uroviricota</taxon>
        <taxon>Caudoviricetes</taxon>
    </lineage>
</organism>
<accession>Q6UAX6</accession>
<comment type="function">
    <molecule>Major capsid protein</molecule>
    <text evidence="7">Major capsid protein that assembles to form an icosahedral capsid.</text>
</comment>
<comment type="subcellular location">
    <molecule>Major capsid protein</molecule>
    <subcellularLocation>
        <location evidence="4">Virion</location>
    </subcellularLocation>
    <text evidence="1">Forms the icosahedral capsid shell.</text>
</comment>
<comment type="domain">
    <molecule>Scaffolding domain delta</molecule>
    <text evidence="2">The scaffolding domain delta has a role of scaffold allowing the self-assembly of the capsid protein.</text>
</comment>
<comment type="PTM">
    <molecule>Scaffolding domain delta</molecule>
    <text evidence="7">The scaffolding domain delta is cleaved by the viral protease and lost after assembly.</text>
</comment>
<comment type="similarity">
    <text evidence="6">Belongs to the HK97 phage major capsid protein family.</text>
</comment>
<name>CAPSD_BPKO2</name>
<proteinExistence type="evidence at protein level"/>
<feature type="chain" id="PRO_0000459454" description="Scaffolding domain delta">
    <location>
        <begin position="1"/>
        <end position="125"/>
    </location>
</feature>
<feature type="chain" id="PRO_0000459455" description="Major capsid protein">
    <location>
        <begin position="126"/>
        <end position="428"/>
    </location>
</feature>
<feature type="coiled-coil region" evidence="3">
    <location>
        <begin position="4"/>
        <end position="24"/>
    </location>
</feature>
<keyword id="KW-0175">Coiled coil</keyword>
<keyword id="KW-0903">Direct protein sequencing</keyword>
<keyword id="KW-0426">Late protein</keyword>
<keyword id="KW-1185">Reference proteome</keyword>
<keyword id="KW-0118">Viral capsid assembly</keyword>
<keyword id="KW-1188">Viral release from host cell</keyword>
<keyword id="KW-0946">Virion</keyword>